<name>MEPA_SALHS</name>
<protein>
    <recommendedName>
        <fullName evidence="1">Penicillin-insensitive murein endopeptidase</fullName>
        <ecNumber evidence="1">3.4.24.-</ecNumber>
    </recommendedName>
    <alternativeName>
        <fullName evidence="1">D-alanyl-D-alanine-endopeptidase</fullName>
        <shortName evidence="1">DD-endopeptidase</shortName>
    </alternativeName>
</protein>
<keyword id="KW-1015">Disulfide bond</keyword>
<keyword id="KW-0378">Hydrolase</keyword>
<keyword id="KW-0479">Metal-binding</keyword>
<keyword id="KW-0482">Metalloprotease</keyword>
<keyword id="KW-0574">Periplasm</keyword>
<keyword id="KW-0645">Protease</keyword>
<keyword id="KW-0732">Signal</keyword>
<keyword id="KW-0862">Zinc</keyword>
<sequence length="274" mass="30177">MKKTAIALLAWFVSSASLAATPWQKITHPVPGAAQSIGSFANGCIIGADTLPVQSDNYQVMRTDQRRYFGHPDLVMFIQRLSHQAQQRGLGTVLIGDMGMPAGGRFNGGHASHQTGLDVDIFLQLPKTRWSQAQLLRPQALDLVSRDGKHVVPSRWSSDIASLIKLAAQDNDVTRIFVNPAIKQQLCLDAGSDRGWLRKVRPWFQHRAHMHVRLRCPADSLECEDQPLPPPGDGCGAELQSWFEPPKPGTTKPEKKTPPPLPPSCQALLDEHVL</sequence>
<feature type="signal peptide" evidence="1">
    <location>
        <begin position="1"/>
        <end position="19"/>
    </location>
</feature>
<feature type="chain" id="PRO_1000186107" description="Penicillin-insensitive murein endopeptidase">
    <location>
        <begin position="20"/>
        <end position="274"/>
    </location>
</feature>
<feature type="region of interest" description="Disordered" evidence="2">
    <location>
        <begin position="225"/>
        <end position="274"/>
    </location>
</feature>
<feature type="binding site" evidence="1">
    <location>
        <position position="110"/>
    </location>
    <ligand>
        <name>Zn(2+)</name>
        <dbReference type="ChEBI" id="CHEBI:29105"/>
        <label>1</label>
    </ligand>
</feature>
<feature type="binding site" evidence="1">
    <location>
        <position position="113"/>
    </location>
    <ligand>
        <name>Zn(2+)</name>
        <dbReference type="ChEBI" id="CHEBI:29105"/>
        <label>1</label>
    </ligand>
</feature>
<feature type="binding site" evidence="1">
    <location>
        <position position="120"/>
    </location>
    <ligand>
        <name>Zn(2+)</name>
        <dbReference type="ChEBI" id="CHEBI:29105"/>
        <label>1</label>
    </ligand>
</feature>
<feature type="binding site" evidence="1">
    <location>
        <position position="147"/>
    </location>
    <ligand>
        <name>Zn(2+)</name>
        <dbReference type="ChEBI" id="CHEBI:29105"/>
        <label>2</label>
    </ligand>
</feature>
<feature type="binding site" evidence="1">
    <location>
        <position position="150"/>
    </location>
    <ligand>
        <name>Zn(2+)</name>
        <dbReference type="ChEBI" id="CHEBI:29105"/>
        <label>2</label>
    </ligand>
</feature>
<feature type="binding site" evidence="1">
    <location>
        <position position="211"/>
    </location>
    <ligand>
        <name>Zn(2+)</name>
        <dbReference type="ChEBI" id="CHEBI:29105"/>
        <label>1</label>
    </ligand>
</feature>
<feature type="disulfide bond" evidence="1">
    <location>
        <begin position="44"/>
        <end position="265"/>
    </location>
</feature>
<feature type="disulfide bond" evidence="1">
    <location>
        <begin position="187"/>
        <end position="235"/>
    </location>
</feature>
<feature type="disulfide bond" evidence="1">
    <location>
        <begin position="216"/>
        <end position="223"/>
    </location>
</feature>
<evidence type="ECO:0000255" key="1">
    <source>
        <dbReference type="HAMAP-Rule" id="MF_01623"/>
    </source>
</evidence>
<evidence type="ECO:0000256" key="2">
    <source>
        <dbReference type="SAM" id="MobiDB-lite"/>
    </source>
</evidence>
<organism>
    <name type="scientific">Salmonella heidelberg (strain SL476)</name>
    <dbReference type="NCBI Taxonomy" id="454169"/>
    <lineage>
        <taxon>Bacteria</taxon>
        <taxon>Pseudomonadati</taxon>
        <taxon>Pseudomonadota</taxon>
        <taxon>Gammaproteobacteria</taxon>
        <taxon>Enterobacterales</taxon>
        <taxon>Enterobacteriaceae</taxon>
        <taxon>Salmonella</taxon>
    </lineage>
</organism>
<comment type="function">
    <text evidence="1">Murein endopeptidase that cleaves the D-alanyl-meso-2,6-diamino-pimelyl amide bond that connects peptidoglycan strands. Likely plays a role in the removal of murein from the sacculus.</text>
</comment>
<comment type="cofactor">
    <cofactor evidence="1">
        <name>Zn(2+)</name>
        <dbReference type="ChEBI" id="CHEBI:29105"/>
    </cofactor>
    <text evidence="1">Binds 2 Zn(2+) ions per subunit. Zn(2+) ion 1 is bound in the active site. Zn(2+) ion 2 is bound at the dimer interface by residues from both subunits.</text>
</comment>
<comment type="subunit">
    <text evidence="1">Dimer.</text>
</comment>
<comment type="subcellular location">
    <subcellularLocation>
        <location evidence="1">Periplasm</location>
    </subcellularLocation>
</comment>
<comment type="similarity">
    <text evidence="1">Belongs to the peptidase M74 family.</text>
</comment>
<reference key="1">
    <citation type="journal article" date="2011" name="J. Bacteriol.">
        <title>Comparative genomics of 28 Salmonella enterica isolates: evidence for CRISPR-mediated adaptive sublineage evolution.</title>
        <authorList>
            <person name="Fricke W.F."/>
            <person name="Mammel M.K."/>
            <person name="McDermott P.F."/>
            <person name="Tartera C."/>
            <person name="White D.G."/>
            <person name="Leclerc J.E."/>
            <person name="Ravel J."/>
            <person name="Cebula T.A."/>
        </authorList>
    </citation>
    <scope>NUCLEOTIDE SEQUENCE [LARGE SCALE GENOMIC DNA]</scope>
    <source>
        <strain>SL476</strain>
    </source>
</reference>
<dbReference type="EC" id="3.4.24.-" evidence="1"/>
<dbReference type="EMBL" id="CP001120">
    <property type="protein sequence ID" value="ACF70200.1"/>
    <property type="molecule type" value="Genomic_DNA"/>
</dbReference>
<dbReference type="RefSeq" id="WP_000750431.1">
    <property type="nucleotide sequence ID" value="NC_011083.1"/>
</dbReference>
<dbReference type="SMR" id="B4TCA4"/>
<dbReference type="MEROPS" id="M74.001"/>
<dbReference type="KEGG" id="seh:SeHA_C2625"/>
<dbReference type="HOGENOM" id="CLU_052496_0_0_6"/>
<dbReference type="Proteomes" id="UP000001866">
    <property type="component" value="Chromosome"/>
</dbReference>
<dbReference type="GO" id="GO:0030288">
    <property type="term" value="C:outer membrane-bounded periplasmic space"/>
    <property type="evidence" value="ECO:0007669"/>
    <property type="project" value="InterPro"/>
</dbReference>
<dbReference type="GO" id="GO:0046872">
    <property type="term" value="F:metal ion binding"/>
    <property type="evidence" value="ECO:0007669"/>
    <property type="project" value="UniProtKB-KW"/>
</dbReference>
<dbReference type="GO" id="GO:0004222">
    <property type="term" value="F:metalloendopeptidase activity"/>
    <property type="evidence" value="ECO:0007669"/>
    <property type="project" value="UniProtKB-UniRule"/>
</dbReference>
<dbReference type="GO" id="GO:0004252">
    <property type="term" value="F:serine-type endopeptidase activity"/>
    <property type="evidence" value="ECO:0007669"/>
    <property type="project" value="InterPro"/>
</dbReference>
<dbReference type="GO" id="GO:0000270">
    <property type="term" value="P:peptidoglycan metabolic process"/>
    <property type="evidence" value="ECO:0007669"/>
    <property type="project" value="UniProtKB-UniRule"/>
</dbReference>
<dbReference type="GO" id="GO:0006508">
    <property type="term" value="P:proteolysis"/>
    <property type="evidence" value="ECO:0007669"/>
    <property type="project" value="UniProtKB-KW"/>
</dbReference>
<dbReference type="FunFam" id="3.30.1380.10:FF:000002">
    <property type="entry name" value="Penicillin-insensitive murein endopeptidase"/>
    <property type="match status" value="1"/>
</dbReference>
<dbReference type="Gene3D" id="3.30.1380.10">
    <property type="match status" value="1"/>
</dbReference>
<dbReference type="HAMAP" id="MF_01623">
    <property type="entry name" value="MepA"/>
    <property type="match status" value="1"/>
</dbReference>
<dbReference type="InterPro" id="IPR009045">
    <property type="entry name" value="Hedgehog_sig/DD-Pept_Zn-bd_sf"/>
</dbReference>
<dbReference type="InterPro" id="IPR005073">
    <property type="entry name" value="Peptidase_M74"/>
</dbReference>
<dbReference type="NCBIfam" id="NF006947">
    <property type="entry name" value="PRK09429.1"/>
    <property type="match status" value="1"/>
</dbReference>
<dbReference type="Pfam" id="PF03411">
    <property type="entry name" value="Peptidase_M74"/>
    <property type="match status" value="1"/>
</dbReference>
<dbReference type="PIRSF" id="PIRSF018455">
    <property type="entry name" value="MepA"/>
    <property type="match status" value="1"/>
</dbReference>
<dbReference type="SUPFAM" id="SSF55166">
    <property type="entry name" value="Hedgehog/DD-peptidase"/>
    <property type="match status" value="1"/>
</dbReference>
<accession>B4TCA4</accession>
<gene>
    <name evidence="1" type="primary">mepA</name>
    <name type="ordered locus">SeHA_C2625</name>
</gene>
<proteinExistence type="inferred from homology"/>